<evidence type="ECO:0000250" key="1"/>
<evidence type="ECO:0000255" key="2"/>
<evidence type="ECO:0000305" key="3"/>
<dbReference type="EC" id="3.4.17.-"/>
<dbReference type="EMBL" id="AM270411">
    <property type="protein sequence ID" value="CAK43346.1"/>
    <property type="molecule type" value="Genomic_DNA"/>
</dbReference>
<dbReference type="RefSeq" id="XP_001399074.1">
    <property type="nucleotide sequence ID" value="XM_001399037.2"/>
</dbReference>
<dbReference type="SMR" id="A2RBC2"/>
<dbReference type="EnsemblFungi" id="CAK43346">
    <property type="protein sequence ID" value="CAK43346"/>
    <property type="gene ID" value="An18g06210"/>
</dbReference>
<dbReference type="GeneID" id="4990189"/>
<dbReference type="KEGG" id="ang:An18g06210"/>
<dbReference type="VEuPathDB" id="FungiDB:An18g06210"/>
<dbReference type="HOGENOM" id="CLU_021802_3_0_1"/>
<dbReference type="Proteomes" id="UP000006706">
    <property type="component" value="Chromosome 8L"/>
</dbReference>
<dbReference type="GO" id="GO:0005576">
    <property type="term" value="C:extracellular region"/>
    <property type="evidence" value="ECO:0007669"/>
    <property type="project" value="UniProtKB-SubCell"/>
</dbReference>
<dbReference type="GO" id="GO:0046872">
    <property type="term" value="F:metal ion binding"/>
    <property type="evidence" value="ECO:0007669"/>
    <property type="project" value="UniProtKB-KW"/>
</dbReference>
<dbReference type="GO" id="GO:0008233">
    <property type="term" value="F:peptidase activity"/>
    <property type="evidence" value="ECO:0007669"/>
    <property type="project" value="UniProtKB-KW"/>
</dbReference>
<dbReference type="GO" id="GO:0006508">
    <property type="term" value="P:proteolysis"/>
    <property type="evidence" value="ECO:0007669"/>
    <property type="project" value="UniProtKB-KW"/>
</dbReference>
<dbReference type="CDD" id="cd05652">
    <property type="entry name" value="M20_ArgE_DapE-like_fungal"/>
    <property type="match status" value="1"/>
</dbReference>
<dbReference type="Gene3D" id="3.30.70.360">
    <property type="match status" value="1"/>
</dbReference>
<dbReference type="Gene3D" id="3.40.630.10">
    <property type="entry name" value="Zn peptidases"/>
    <property type="match status" value="1"/>
</dbReference>
<dbReference type="InterPro" id="IPR001261">
    <property type="entry name" value="ArgE/DapE_CS"/>
</dbReference>
<dbReference type="InterPro" id="IPR036264">
    <property type="entry name" value="Bact_exopeptidase_dim_dom"/>
</dbReference>
<dbReference type="InterPro" id="IPR002933">
    <property type="entry name" value="Peptidase_M20"/>
</dbReference>
<dbReference type="InterPro" id="IPR011650">
    <property type="entry name" value="Peptidase_M20_dimer"/>
</dbReference>
<dbReference type="InterPro" id="IPR050072">
    <property type="entry name" value="Peptidase_M20A"/>
</dbReference>
<dbReference type="PANTHER" id="PTHR43808">
    <property type="entry name" value="ACETYLORNITHINE DEACETYLASE"/>
    <property type="match status" value="1"/>
</dbReference>
<dbReference type="PANTHER" id="PTHR43808:SF8">
    <property type="entry name" value="PEPTIDASE M20 DIMERISATION DOMAIN-CONTAINING PROTEIN"/>
    <property type="match status" value="1"/>
</dbReference>
<dbReference type="Pfam" id="PF07687">
    <property type="entry name" value="M20_dimer"/>
    <property type="match status" value="1"/>
</dbReference>
<dbReference type="Pfam" id="PF01546">
    <property type="entry name" value="Peptidase_M20"/>
    <property type="match status" value="1"/>
</dbReference>
<dbReference type="SUPFAM" id="SSF55031">
    <property type="entry name" value="Bacterial exopeptidase dimerisation domain"/>
    <property type="match status" value="1"/>
</dbReference>
<dbReference type="SUPFAM" id="SSF53187">
    <property type="entry name" value="Zn-dependent exopeptidases"/>
    <property type="match status" value="1"/>
</dbReference>
<dbReference type="PROSITE" id="PS00758">
    <property type="entry name" value="ARGE_DAPE_CPG2_1"/>
    <property type="match status" value="1"/>
</dbReference>
<dbReference type="PROSITE" id="PS00759">
    <property type="entry name" value="ARGE_DAPE_CPG2_2"/>
    <property type="match status" value="1"/>
</dbReference>
<protein>
    <recommendedName>
        <fullName>Probable carboxypeptidase An18g06210</fullName>
        <ecNumber>3.4.17.-</ecNumber>
    </recommendedName>
    <alternativeName>
        <fullName>Peptidase M20 domain-containing protein An18g06210</fullName>
    </alternativeName>
</protein>
<organism>
    <name type="scientific">Aspergillus niger (strain ATCC MYA-4892 / CBS 513.88 / FGSC A1513)</name>
    <dbReference type="NCBI Taxonomy" id="425011"/>
    <lineage>
        <taxon>Eukaryota</taxon>
        <taxon>Fungi</taxon>
        <taxon>Dikarya</taxon>
        <taxon>Ascomycota</taxon>
        <taxon>Pezizomycotina</taxon>
        <taxon>Eurotiomycetes</taxon>
        <taxon>Eurotiomycetidae</taxon>
        <taxon>Eurotiales</taxon>
        <taxon>Aspergillaceae</taxon>
        <taxon>Aspergillus</taxon>
        <taxon>Aspergillus subgen. Circumdati</taxon>
    </lineage>
</organism>
<proteinExistence type="inferred from homology"/>
<keyword id="KW-0325">Glycoprotein</keyword>
<keyword id="KW-0378">Hydrolase</keyword>
<keyword id="KW-0479">Metal-binding</keyword>
<keyword id="KW-0645">Protease</keyword>
<keyword id="KW-1185">Reference proteome</keyword>
<keyword id="KW-0964">Secreted</keyword>
<keyword id="KW-0732">Signal</keyword>
<keyword id="KW-0862">Zinc</keyword>
<feature type="signal peptide" evidence="2">
    <location>
        <begin position="1"/>
        <end position="16"/>
    </location>
</feature>
<feature type="chain" id="PRO_5000221355" description="Probable carboxypeptidase An18g06210">
    <location>
        <begin position="17"/>
        <end position="416"/>
    </location>
</feature>
<feature type="active site" description="Proton acceptor" evidence="1">
    <location>
        <position position="174"/>
    </location>
</feature>
<feature type="binding site" evidence="1">
    <location>
        <position position="142"/>
    </location>
    <ligand>
        <name>Zn(2+)</name>
        <dbReference type="ChEBI" id="CHEBI:29105"/>
        <label>1</label>
    </ligand>
</feature>
<feature type="binding site" evidence="1">
    <location>
        <position position="142"/>
    </location>
    <ligand>
        <name>Zn(2+)</name>
        <dbReference type="ChEBI" id="CHEBI:29105"/>
        <label>2</label>
    </ligand>
</feature>
<feature type="binding site" evidence="1">
    <location>
        <position position="175"/>
    </location>
    <ligand>
        <name>Zn(2+)</name>
        <dbReference type="ChEBI" id="CHEBI:29105"/>
        <label>1</label>
    </ligand>
</feature>
<feature type="glycosylation site" description="N-linked (GlcNAc...) asparagine" evidence="2">
    <location>
        <position position="54"/>
    </location>
</feature>
<feature type="glycosylation site" description="N-linked (GlcNAc...) asparagine" evidence="2">
    <location>
        <position position="70"/>
    </location>
</feature>
<feature type="glycosylation site" description="N-linked (GlcNAc...) asparagine" evidence="2">
    <location>
        <position position="129"/>
    </location>
</feature>
<feature type="glycosylation site" description="N-linked (GlcNAc...) asparagine" evidence="2">
    <location>
        <position position="187"/>
    </location>
</feature>
<feature type="glycosylation site" description="N-linked (GlcNAc...) asparagine" evidence="2">
    <location>
        <position position="319"/>
    </location>
</feature>
<name>P20D1_ASPNC</name>
<comment type="cofactor">
    <cofactor evidence="1">
        <name>Zn(2+)</name>
        <dbReference type="ChEBI" id="CHEBI:29105"/>
    </cofactor>
    <text evidence="1">Binds 2 Zn(2+) ions per subunit.</text>
</comment>
<comment type="subcellular location">
    <subcellularLocation>
        <location evidence="3">Secreted</location>
    </subcellularLocation>
</comment>
<comment type="similarity">
    <text evidence="3">Belongs to the peptidase M20A family.</text>
</comment>
<accession>A2RBC2</accession>
<reference key="1">
    <citation type="journal article" date="2007" name="Nat. Biotechnol.">
        <title>Genome sequencing and analysis of the versatile cell factory Aspergillus niger CBS 513.88.</title>
        <authorList>
            <person name="Pel H.J."/>
            <person name="de Winde J.H."/>
            <person name="Archer D.B."/>
            <person name="Dyer P.S."/>
            <person name="Hofmann G."/>
            <person name="Schaap P.J."/>
            <person name="Turner G."/>
            <person name="de Vries R.P."/>
            <person name="Albang R."/>
            <person name="Albermann K."/>
            <person name="Andersen M.R."/>
            <person name="Bendtsen J.D."/>
            <person name="Benen J.A.E."/>
            <person name="van den Berg M."/>
            <person name="Breestraat S."/>
            <person name="Caddick M.X."/>
            <person name="Contreras R."/>
            <person name="Cornell M."/>
            <person name="Coutinho P.M."/>
            <person name="Danchin E.G.J."/>
            <person name="Debets A.J.M."/>
            <person name="Dekker P."/>
            <person name="van Dijck P.W.M."/>
            <person name="van Dijk A."/>
            <person name="Dijkhuizen L."/>
            <person name="Driessen A.J.M."/>
            <person name="d'Enfert C."/>
            <person name="Geysens S."/>
            <person name="Goosen C."/>
            <person name="Groot G.S.P."/>
            <person name="de Groot P.W.J."/>
            <person name="Guillemette T."/>
            <person name="Henrissat B."/>
            <person name="Herweijer M."/>
            <person name="van den Hombergh J.P.T.W."/>
            <person name="van den Hondel C.A.M.J.J."/>
            <person name="van der Heijden R.T.J.M."/>
            <person name="van der Kaaij R.M."/>
            <person name="Klis F.M."/>
            <person name="Kools H.J."/>
            <person name="Kubicek C.P."/>
            <person name="van Kuyk P.A."/>
            <person name="Lauber J."/>
            <person name="Lu X."/>
            <person name="van der Maarel M.J.E.C."/>
            <person name="Meulenberg R."/>
            <person name="Menke H."/>
            <person name="Mortimer M.A."/>
            <person name="Nielsen J."/>
            <person name="Oliver S.G."/>
            <person name="Olsthoorn M."/>
            <person name="Pal K."/>
            <person name="van Peij N.N.M.E."/>
            <person name="Ram A.F.J."/>
            <person name="Rinas U."/>
            <person name="Roubos J.A."/>
            <person name="Sagt C.M.J."/>
            <person name="Schmoll M."/>
            <person name="Sun J."/>
            <person name="Ussery D."/>
            <person name="Varga J."/>
            <person name="Vervecken W."/>
            <person name="van de Vondervoort P.J.J."/>
            <person name="Wedler H."/>
            <person name="Woesten H.A.B."/>
            <person name="Zeng A.-P."/>
            <person name="van Ooyen A.J.J."/>
            <person name="Visser J."/>
            <person name="Stam H."/>
        </authorList>
    </citation>
    <scope>NUCLEOTIDE SEQUENCE [LARGE SCALE GENOMIC DNA]</scope>
    <source>
        <strain>ATCC MYA-4892 / CBS 513.88 / FGSC A1513</strain>
    </source>
</reference>
<gene>
    <name type="ORF">An18g06210</name>
</gene>
<sequence>MKSPISLLAAVGVASAASPQTLLSLASTASDIIDASPFLSFHRDIVQIPSISGNETAVGTFVAEFLESHNFTVIKQPVPSSSNGDPNRFNIFAYPSTSPSQGRPDILLTSHIDTVPPFIPYGLHDDANNNSNILISGRGTVDAKASVAAQIFAVLDTLESNPTASLGLLFVVDEEVGGLGMRTFSDNSTLNPSPSPYHTVIFGEPTEQALVAGHKGMLEFPIIATGQAAHSGYPWLGSSAISALLPALSRVDRLGKIPEAEGGLPASEKYGETTVNIGRVDAGVAANVVPSSAIAEVAIRLAAGTPDEAREIVARAVRNATGGDEHVYCDFAAYAGGYAPQDLDTDVPGFEVTTVNYGTDVPNLKVSEGVKRYLYGPGSIHVAHGDNEAITVGQLEEAVRGYKQLIEAAVQRARRT</sequence>